<name>CARM1_DANRE</name>
<keyword id="KW-0156">Chromatin regulator</keyword>
<keyword id="KW-0158">Chromosome</keyword>
<keyword id="KW-0963">Cytoplasm</keyword>
<keyword id="KW-0489">Methyltransferase</keyword>
<keyword id="KW-0539">Nucleus</keyword>
<keyword id="KW-1185">Reference proteome</keyword>
<keyword id="KW-0949">S-adenosyl-L-methionine</keyword>
<keyword id="KW-0804">Transcription</keyword>
<keyword id="KW-0805">Transcription regulation</keyword>
<keyword id="KW-0808">Transferase</keyword>
<accession>Q6DC04</accession>
<gene>
    <name type="primary">carm1</name>
    <name type="ORF">si:dkey-204f11.63</name>
    <name type="ORF">zgc:100805</name>
</gene>
<dbReference type="EC" id="2.1.1.319" evidence="2"/>
<dbReference type="EMBL" id="BX649502">
    <property type="protein sequence ID" value="CAI20831.1"/>
    <property type="molecule type" value="Genomic_DNA"/>
</dbReference>
<dbReference type="EMBL" id="BC078292">
    <property type="protein sequence ID" value="AAH78292.1"/>
    <property type="molecule type" value="mRNA"/>
</dbReference>
<dbReference type="RefSeq" id="NP_001003645.1">
    <property type="nucleotide sequence ID" value="NM_001003645.2"/>
</dbReference>
<dbReference type="SMR" id="Q6DC04"/>
<dbReference type="FunCoup" id="Q6DC04">
    <property type="interactions" value="1755"/>
</dbReference>
<dbReference type="STRING" id="7955.ENSDARP00000016959"/>
<dbReference type="PaxDb" id="7955-ENSDARP00000016959"/>
<dbReference type="Ensembl" id="ENSDART00000006091">
    <property type="protein sequence ID" value="ENSDARP00000016959"/>
    <property type="gene ID" value="ENSDARG00000018698"/>
</dbReference>
<dbReference type="GeneID" id="445251"/>
<dbReference type="KEGG" id="dre:445251"/>
<dbReference type="AGR" id="ZFIN:ZDB-GENE-040724-77"/>
<dbReference type="CTD" id="10498"/>
<dbReference type="ZFIN" id="ZDB-GENE-040724-77">
    <property type="gene designation" value="carm1"/>
</dbReference>
<dbReference type="eggNOG" id="KOG1500">
    <property type="taxonomic scope" value="Eukaryota"/>
</dbReference>
<dbReference type="HOGENOM" id="CLU_017375_0_1_1"/>
<dbReference type="InParanoid" id="Q6DC04"/>
<dbReference type="OMA" id="ASNMAHH"/>
<dbReference type="OrthoDB" id="7848332at2759"/>
<dbReference type="PhylomeDB" id="Q6DC04"/>
<dbReference type="TreeFam" id="TF323332"/>
<dbReference type="Reactome" id="R-DRE-400206">
    <property type="pathway name" value="Regulation of lipid metabolism by PPARalpha"/>
</dbReference>
<dbReference type="Reactome" id="R-DRE-9018519">
    <property type="pathway name" value="Estrogen-dependent gene expression"/>
</dbReference>
<dbReference type="Reactome" id="R-DRE-9707564">
    <property type="pathway name" value="Cytoprotection by HMOX1"/>
</dbReference>
<dbReference type="PRO" id="PR:Q6DC04"/>
<dbReference type="Proteomes" id="UP000000437">
    <property type="component" value="Chromosome 3"/>
</dbReference>
<dbReference type="Bgee" id="ENSDARG00000018698">
    <property type="expression patterns" value="Expressed in camera-type eye and 28 other cell types or tissues"/>
</dbReference>
<dbReference type="ExpressionAtlas" id="Q6DC04">
    <property type="expression patterns" value="baseline"/>
</dbReference>
<dbReference type="GO" id="GO:0005829">
    <property type="term" value="C:cytosol"/>
    <property type="evidence" value="ECO:0000250"/>
    <property type="project" value="UniProtKB"/>
</dbReference>
<dbReference type="GO" id="GO:0043596">
    <property type="term" value="C:nuclear replication fork"/>
    <property type="evidence" value="ECO:0000250"/>
    <property type="project" value="UniProtKB"/>
</dbReference>
<dbReference type="GO" id="GO:0005634">
    <property type="term" value="C:nucleus"/>
    <property type="evidence" value="ECO:0000250"/>
    <property type="project" value="UniProtKB"/>
</dbReference>
<dbReference type="GO" id="GO:0035642">
    <property type="term" value="F:histone H3R17 methyltransferase activity"/>
    <property type="evidence" value="ECO:0000250"/>
    <property type="project" value="UniProtKB"/>
</dbReference>
<dbReference type="GO" id="GO:0070611">
    <property type="term" value="F:histone H3R2 methyltransferase activity"/>
    <property type="evidence" value="ECO:0000250"/>
    <property type="project" value="UniProtKB"/>
</dbReference>
<dbReference type="GO" id="GO:0140903">
    <property type="term" value="F:histone H3R26 methyltransferase activity"/>
    <property type="evidence" value="ECO:0000250"/>
    <property type="project" value="UniProtKB"/>
</dbReference>
<dbReference type="GO" id="GO:0016274">
    <property type="term" value="F:protein-arginine N-methyltransferase activity"/>
    <property type="evidence" value="ECO:0000250"/>
    <property type="project" value="UniProtKB"/>
</dbReference>
<dbReference type="GO" id="GO:0035242">
    <property type="term" value="F:protein-arginine omega-N asymmetric methyltransferase activity"/>
    <property type="evidence" value="ECO:0000250"/>
    <property type="project" value="UniProtKB"/>
</dbReference>
<dbReference type="GO" id="GO:0008757">
    <property type="term" value="F:S-adenosylmethionine-dependent methyltransferase activity"/>
    <property type="evidence" value="ECO:0000250"/>
    <property type="project" value="ZFIN"/>
</dbReference>
<dbReference type="GO" id="GO:0000976">
    <property type="term" value="F:transcription cis-regulatory region binding"/>
    <property type="evidence" value="ECO:0000250"/>
    <property type="project" value="UniProtKB"/>
</dbReference>
<dbReference type="GO" id="GO:0003713">
    <property type="term" value="F:transcription coactivator activity"/>
    <property type="evidence" value="ECO:0000250"/>
    <property type="project" value="UniProtKB"/>
</dbReference>
<dbReference type="GO" id="GO:0006338">
    <property type="term" value="P:chromatin remodeling"/>
    <property type="evidence" value="ECO:0000318"/>
    <property type="project" value="GO_Central"/>
</dbReference>
<dbReference type="GO" id="GO:0032259">
    <property type="term" value="P:methylation"/>
    <property type="evidence" value="ECO:0007669"/>
    <property type="project" value="UniProtKB-KW"/>
</dbReference>
<dbReference type="GO" id="GO:0045600">
    <property type="term" value="P:positive regulation of fat cell differentiation"/>
    <property type="evidence" value="ECO:0000250"/>
    <property type="project" value="UniProtKB"/>
</dbReference>
<dbReference type="GO" id="GO:0006355">
    <property type="term" value="P:regulation of DNA-templated transcription"/>
    <property type="evidence" value="ECO:0000318"/>
    <property type="project" value="GO_Central"/>
</dbReference>
<dbReference type="GO" id="GO:0033146">
    <property type="term" value="P:regulation of intracellular estrogen receptor signaling pathway"/>
    <property type="evidence" value="ECO:0000250"/>
    <property type="project" value="UniProtKB"/>
</dbReference>
<dbReference type="GO" id="GO:0048742">
    <property type="term" value="P:regulation of skeletal muscle fiber development"/>
    <property type="evidence" value="ECO:0000315"/>
    <property type="project" value="ZFIN"/>
</dbReference>
<dbReference type="GO" id="GO:0071932">
    <property type="term" value="P:replication fork reversal"/>
    <property type="evidence" value="ECO:0000250"/>
    <property type="project" value="UniProtKB"/>
</dbReference>
<dbReference type="CDD" id="cd02440">
    <property type="entry name" value="AdoMet_MTases"/>
    <property type="match status" value="1"/>
</dbReference>
<dbReference type="CDD" id="cd13330">
    <property type="entry name" value="PH_CARM1"/>
    <property type="match status" value="1"/>
</dbReference>
<dbReference type="FunFam" id="2.30.29.30:FF:000235">
    <property type="entry name" value="Coactivator-associated arginine methyltransferase 1"/>
    <property type="match status" value="1"/>
</dbReference>
<dbReference type="FunFam" id="2.70.160.11:FF:000002">
    <property type="entry name" value="Probable histone-arginine methyltransferase CARM1"/>
    <property type="match status" value="1"/>
</dbReference>
<dbReference type="FunFam" id="3.40.50.150:FF:000031">
    <property type="entry name" value="Putative Histone-arginine methyltransferase CARM1"/>
    <property type="match status" value="1"/>
</dbReference>
<dbReference type="Gene3D" id="2.70.160.11">
    <property type="entry name" value="Hnrnp arginine n-methyltransferase1"/>
    <property type="match status" value="1"/>
</dbReference>
<dbReference type="Gene3D" id="2.30.29.30">
    <property type="entry name" value="Pleckstrin-homology domain (PH domain)/Phosphotyrosine-binding domain (PTB)"/>
    <property type="match status" value="1"/>
</dbReference>
<dbReference type="Gene3D" id="3.40.50.150">
    <property type="entry name" value="Vaccinia Virus protein VP39"/>
    <property type="match status" value="1"/>
</dbReference>
<dbReference type="InterPro" id="IPR025799">
    <property type="entry name" value="Arg_MeTrfase"/>
</dbReference>
<dbReference type="InterPro" id="IPR020989">
    <property type="entry name" value="Histone-Arg_MeTrfase_N"/>
</dbReference>
<dbReference type="InterPro" id="IPR011993">
    <property type="entry name" value="PH-like_dom_sf"/>
</dbReference>
<dbReference type="InterPro" id="IPR055135">
    <property type="entry name" value="PRMT_dom"/>
</dbReference>
<dbReference type="InterPro" id="IPR029063">
    <property type="entry name" value="SAM-dependent_MTases_sf"/>
</dbReference>
<dbReference type="PANTHER" id="PTHR11006:SF51">
    <property type="entry name" value="HISTONE-ARGININE METHYLTRANSFERASE CARM1"/>
    <property type="match status" value="1"/>
</dbReference>
<dbReference type="PANTHER" id="PTHR11006">
    <property type="entry name" value="PROTEIN ARGININE N-METHYLTRANSFERASE"/>
    <property type="match status" value="1"/>
</dbReference>
<dbReference type="Pfam" id="PF11531">
    <property type="entry name" value="CARM1"/>
    <property type="match status" value="1"/>
</dbReference>
<dbReference type="Pfam" id="PF06325">
    <property type="entry name" value="PrmA"/>
    <property type="match status" value="1"/>
</dbReference>
<dbReference type="Pfam" id="PF22528">
    <property type="entry name" value="PRMT_C"/>
    <property type="match status" value="1"/>
</dbReference>
<dbReference type="SUPFAM" id="SSF53335">
    <property type="entry name" value="S-adenosyl-L-methionine-dependent methyltransferases"/>
    <property type="match status" value="1"/>
</dbReference>
<dbReference type="PROSITE" id="PS51678">
    <property type="entry name" value="SAM_MT_PRMT"/>
    <property type="match status" value="1"/>
</dbReference>
<organism>
    <name type="scientific">Danio rerio</name>
    <name type="common">Zebrafish</name>
    <name type="synonym">Brachydanio rerio</name>
    <dbReference type="NCBI Taxonomy" id="7955"/>
    <lineage>
        <taxon>Eukaryota</taxon>
        <taxon>Metazoa</taxon>
        <taxon>Chordata</taxon>
        <taxon>Craniata</taxon>
        <taxon>Vertebrata</taxon>
        <taxon>Euteleostomi</taxon>
        <taxon>Actinopterygii</taxon>
        <taxon>Neopterygii</taxon>
        <taxon>Teleostei</taxon>
        <taxon>Ostariophysi</taxon>
        <taxon>Cypriniformes</taxon>
        <taxon>Danionidae</taxon>
        <taxon>Danioninae</taxon>
        <taxon>Danio</taxon>
    </lineage>
</organism>
<sequence length="588" mass="64896">MAVSVFSGVRLLSIGDANGDIQRHSEQQPLRLEIKMNQDAAQIILSNNEETCVFKCTVLRETECSRVGKQSFIITLGCNSVLLQFASPADFSSFYNLLKICRGQKGDRSVFSDRTEESSAVQYFQFYGYLSQQQNMMQDYVRTGTYQRAILQNHTDFKDKVVLDVGCGSGILSFFAAQAGARKVYAVEASTMAQHAEVLVNSNRLSERVVVIPGKVEEVSLPEQVDIIISEPMGYMLFNERMLESYLHAKKFLKPSGKMFPTIGDVHLAPFTDEQLYMEQFTKANFWYQPSFHGVDLSALRGAAVDEYFRQPIVDTFDIRILMAKSVKYTVNFLEAKEEDLYKIEIPFKFHMMHSGLVHGLAFWFDVAFIGSVMTVWLSTAPTEPLTHWYQVRCLLQSPLFAKAGDTMSGTALLIANKRQSYDISIVAQVDQTGSKSSNLLDLKNPFFRYTGTTPAPPPGSHYSSPSENMWNTGGTYSMSQGMAVSGMPTAYDLSTVIGGSGTTVSHNNLIPLGTDTHALNTGIVNHTHSRMGSIMSTGIVQGATTAQQGPSSASLHYPVTNQFTMGGPAISMASPMAIPSNTMHYGS</sequence>
<reference key="1">
    <citation type="journal article" date="2013" name="Nature">
        <title>The zebrafish reference genome sequence and its relationship to the human genome.</title>
        <authorList>
            <person name="Howe K."/>
            <person name="Clark M.D."/>
            <person name="Torroja C.F."/>
            <person name="Torrance J."/>
            <person name="Berthelot C."/>
            <person name="Muffato M."/>
            <person name="Collins J.E."/>
            <person name="Humphray S."/>
            <person name="McLaren K."/>
            <person name="Matthews L."/>
            <person name="McLaren S."/>
            <person name="Sealy I."/>
            <person name="Caccamo M."/>
            <person name="Churcher C."/>
            <person name="Scott C."/>
            <person name="Barrett J.C."/>
            <person name="Koch R."/>
            <person name="Rauch G.J."/>
            <person name="White S."/>
            <person name="Chow W."/>
            <person name="Kilian B."/>
            <person name="Quintais L.T."/>
            <person name="Guerra-Assuncao J.A."/>
            <person name="Zhou Y."/>
            <person name="Gu Y."/>
            <person name="Yen J."/>
            <person name="Vogel J.H."/>
            <person name="Eyre T."/>
            <person name="Redmond S."/>
            <person name="Banerjee R."/>
            <person name="Chi J."/>
            <person name="Fu B."/>
            <person name="Langley E."/>
            <person name="Maguire S.F."/>
            <person name="Laird G.K."/>
            <person name="Lloyd D."/>
            <person name="Kenyon E."/>
            <person name="Donaldson S."/>
            <person name="Sehra H."/>
            <person name="Almeida-King J."/>
            <person name="Loveland J."/>
            <person name="Trevanion S."/>
            <person name="Jones M."/>
            <person name="Quail M."/>
            <person name="Willey D."/>
            <person name="Hunt A."/>
            <person name="Burton J."/>
            <person name="Sims S."/>
            <person name="McLay K."/>
            <person name="Plumb B."/>
            <person name="Davis J."/>
            <person name="Clee C."/>
            <person name="Oliver K."/>
            <person name="Clark R."/>
            <person name="Riddle C."/>
            <person name="Elliot D."/>
            <person name="Threadgold G."/>
            <person name="Harden G."/>
            <person name="Ware D."/>
            <person name="Begum S."/>
            <person name="Mortimore B."/>
            <person name="Kerry G."/>
            <person name="Heath P."/>
            <person name="Phillimore B."/>
            <person name="Tracey A."/>
            <person name="Corby N."/>
            <person name="Dunn M."/>
            <person name="Johnson C."/>
            <person name="Wood J."/>
            <person name="Clark S."/>
            <person name="Pelan S."/>
            <person name="Griffiths G."/>
            <person name="Smith M."/>
            <person name="Glithero R."/>
            <person name="Howden P."/>
            <person name="Barker N."/>
            <person name="Lloyd C."/>
            <person name="Stevens C."/>
            <person name="Harley J."/>
            <person name="Holt K."/>
            <person name="Panagiotidis G."/>
            <person name="Lovell J."/>
            <person name="Beasley H."/>
            <person name="Henderson C."/>
            <person name="Gordon D."/>
            <person name="Auger K."/>
            <person name="Wright D."/>
            <person name="Collins J."/>
            <person name="Raisen C."/>
            <person name="Dyer L."/>
            <person name="Leung K."/>
            <person name="Robertson L."/>
            <person name="Ambridge K."/>
            <person name="Leongamornlert D."/>
            <person name="McGuire S."/>
            <person name="Gilderthorp R."/>
            <person name="Griffiths C."/>
            <person name="Manthravadi D."/>
            <person name="Nichol S."/>
            <person name="Barker G."/>
            <person name="Whitehead S."/>
            <person name="Kay M."/>
            <person name="Brown J."/>
            <person name="Murnane C."/>
            <person name="Gray E."/>
            <person name="Humphries M."/>
            <person name="Sycamore N."/>
            <person name="Barker D."/>
            <person name="Saunders D."/>
            <person name="Wallis J."/>
            <person name="Babbage A."/>
            <person name="Hammond S."/>
            <person name="Mashreghi-Mohammadi M."/>
            <person name="Barr L."/>
            <person name="Martin S."/>
            <person name="Wray P."/>
            <person name="Ellington A."/>
            <person name="Matthews N."/>
            <person name="Ellwood M."/>
            <person name="Woodmansey R."/>
            <person name="Clark G."/>
            <person name="Cooper J."/>
            <person name="Tromans A."/>
            <person name="Grafham D."/>
            <person name="Skuce C."/>
            <person name="Pandian R."/>
            <person name="Andrews R."/>
            <person name="Harrison E."/>
            <person name="Kimberley A."/>
            <person name="Garnett J."/>
            <person name="Fosker N."/>
            <person name="Hall R."/>
            <person name="Garner P."/>
            <person name="Kelly D."/>
            <person name="Bird C."/>
            <person name="Palmer S."/>
            <person name="Gehring I."/>
            <person name="Berger A."/>
            <person name="Dooley C.M."/>
            <person name="Ersan-Urun Z."/>
            <person name="Eser C."/>
            <person name="Geiger H."/>
            <person name="Geisler M."/>
            <person name="Karotki L."/>
            <person name="Kirn A."/>
            <person name="Konantz J."/>
            <person name="Konantz M."/>
            <person name="Oberlander M."/>
            <person name="Rudolph-Geiger S."/>
            <person name="Teucke M."/>
            <person name="Lanz C."/>
            <person name="Raddatz G."/>
            <person name="Osoegawa K."/>
            <person name="Zhu B."/>
            <person name="Rapp A."/>
            <person name="Widaa S."/>
            <person name="Langford C."/>
            <person name="Yang F."/>
            <person name="Schuster S.C."/>
            <person name="Carter N.P."/>
            <person name="Harrow J."/>
            <person name="Ning Z."/>
            <person name="Herrero J."/>
            <person name="Searle S.M."/>
            <person name="Enright A."/>
            <person name="Geisler R."/>
            <person name="Plasterk R.H."/>
            <person name="Lee C."/>
            <person name="Westerfield M."/>
            <person name="de Jong P.J."/>
            <person name="Zon L.I."/>
            <person name="Postlethwait J.H."/>
            <person name="Nusslein-Volhard C."/>
            <person name="Hubbard T.J."/>
            <person name="Roest Crollius H."/>
            <person name="Rogers J."/>
            <person name="Stemple D.L."/>
        </authorList>
    </citation>
    <scope>NUCLEOTIDE SEQUENCE [LARGE SCALE GENOMIC DNA]</scope>
    <source>
        <strain>Tuebingen</strain>
    </source>
</reference>
<reference key="2">
    <citation type="submission" date="2004-07" db="EMBL/GenBank/DDBJ databases">
        <authorList>
            <consortium name="NIH - Zebrafish Gene Collection (ZGC) project"/>
        </authorList>
    </citation>
    <scope>NUCLEOTIDE SEQUENCE [LARGE SCALE MRNA]</scope>
    <source>
        <tissue>Embryo</tissue>
    </source>
</reference>
<protein>
    <recommendedName>
        <fullName>Histone-arginine methyltransferase CARM1</fullName>
        <ecNumber evidence="2">2.1.1.319</ecNumber>
    </recommendedName>
    <alternativeName>
        <fullName>Coactivator-associated arginine methyltransferase 1</fullName>
    </alternativeName>
    <alternativeName>
        <fullName>Protein arginine N-methyltransferase 4</fullName>
    </alternativeName>
</protein>
<evidence type="ECO:0000250" key="1">
    <source>
        <dbReference type="UniProtKB" id="Q86X55"/>
    </source>
</evidence>
<evidence type="ECO:0000250" key="2">
    <source>
        <dbReference type="UniProtKB" id="Q9WVG6"/>
    </source>
</evidence>
<evidence type="ECO:0000255" key="3">
    <source>
        <dbReference type="PROSITE-ProRule" id="PRU01015"/>
    </source>
</evidence>
<proteinExistence type="evidence at transcript level"/>
<feature type="chain" id="PRO_0000249251" description="Histone-arginine methyltransferase CARM1">
    <location>
        <begin position="1"/>
        <end position="588"/>
    </location>
</feature>
<feature type="domain" description="SAM-dependent MTase PRMT-type" evidence="3">
    <location>
        <begin position="120"/>
        <end position="427"/>
    </location>
</feature>
<feature type="region of interest" description="Transactivation domain" evidence="2">
    <location>
        <begin position="473"/>
        <end position="588"/>
    </location>
</feature>
<feature type="binding site" evidence="2">
    <location>
        <position position="133"/>
    </location>
    <ligand>
        <name>S-adenosyl-L-methionine</name>
        <dbReference type="ChEBI" id="CHEBI:59789"/>
    </ligand>
</feature>
<feature type="binding site" evidence="2">
    <location>
        <position position="142"/>
    </location>
    <ligand>
        <name>S-adenosyl-L-methionine</name>
        <dbReference type="ChEBI" id="CHEBI:59789"/>
    </ligand>
</feature>
<feature type="binding site" evidence="2">
    <location>
        <position position="166"/>
    </location>
    <ligand>
        <name>S-adenosyl-L-methionine</name>
        <dbReference type="ChEBI" id="CHEBI:59789"/>
    </ligand>
</feature>
<feature type="binding site" evidence="2">
    <location>
        <position position="188"/>
    </location>
    <ligand>
        <name>S-adenosyl-L-methionine</name>
        <dbReference type="ChEBI" id="CHEBI:59789"/>
    </ligand>
</feature>
<feature type="binding site" evidence="2">
    <location>
        <position position="217"/>
    </location>
    <ligand>
        <name>S-adenosyl-L-methionine</name>
        <dbReference type="ChEBI" id="CHEBI:59789"/>
    </ligand>
</feature>
<feature type="binding site" evidence="2">
    <location>
        <position position="245"/>
    </location>
    <ligand>
        <name>S-adenosyl-L-methionine</name>
        <dbReference type="ChEBI" id="CHEBI:59789"/>
    </ligand>
</feature>
<comment type="function">
    <text evidence="1 2">Methylates (mono- and asymmetric dimethylation) the guanidino nitrogens of arginyl residues in several proteins involved in DNA packaging, transcription regulation, pre-mRNA splicing, and mRNA stability. Recruited to promoters upon gene activation together with histone acetyltransferases from EP300/P300 and p160 families, methylates histone H3 at 'Arg-17' (H3R17me) and activates transcription via chromatin remodeling.</text>
</comment>
<comment type="catalytic activity">
    <reaction evidence="2">
        <text>L-arginyl-[protein] + 2 S-adenosyl-L-methionine = N(omega),N(omega)-dimethyl-L-arginyl-[protein] + 2 S-adenosyl-L-homocysteine + 2 H(+)</text>
        <dbReference type="Rhea" id="RHEA:48096"/>
        <dbReference type="Rhea" id="RHEA-COMP:10532"/>
        <dbReference type="Rhea" id="RHEA-COMP:11991"/>
        <dbReference type="ChEBI" id="CHEBI:15378"/>
        <dbReference type="ChEBI" id="CHEBI:29965"/>
        <dbReference type="ChEBI" id="CHEBI:57856"/>
        <dbReference type="ChEBI" id="CHEBI:59789"/>
        <dbReference type="ChEBI" id="CHEBI:61897"/>
        <dbReference type="EC" id="2.1.1.319"/>
    </reaction>
</comment>
<comment type="subunit">
    <text evidence="2">Homodimer.</text>
</comment>
<comment type="subcellular location">
    <subcellularLocation>
        <location evidence="1">Nucleus</location>
    </subcellularLocation>
    <subcellularLocation>
        <location evidence="1">Cytoplasm</location>
    </subcellularLocation>
    <subcellularLocation>
        <location evidence="1">Chromosome</location>
    </subcellularLocation>
</comment>
<comment type="similarity">
    <text evidence="3">Belongs to the class I-like SAM-binding methyltransferase superfamily. Protein arginine N-methyltransferase family.</text>
</comment>